<dbReference type="EC" id="2.7.1.105" evidence="3"/>
<dbReference type="EC" id="3.1.3.46" evidence="3"/>
<dbReference type="EMBL" id="AK132629">
    <property type="protein sequence ID" value="BAE21271.1"/>
    <property type="molecule type" value="mRNA"/>
</dbReference>
<dbReference type="EMBL" id="AL672150">
    <property type="status" value="NOT_ANNOTATED_CDS"/>
    <property type="molecule type" value="Genomic_DNA"/>
</dbReference>
<dbReference type="EMBL" id="X98848">
    <property type="protein sequence ID" value="CAA67353.1"/>
    <property type="molecule type" value="mRNA"/>
</dbReference>
<dbReference type="CCDS" id="CCDS30464.1">
    <molecule id="P70266-2"/>
</dbReference>
<dbReference type="CCDS" id="CCDS90763.1">
    <molecule id="P70266-1"/>
</dbReference>
<dbReference type="PIR" id="S74243">
    <property type="entry name" value="S74243"/>
</dbReference>
<dbReference type="RefSeq" id="NP_001361099.1">
    <molecule id="P70266-2"/>
    <property type="nucleotide sequence ID" value="NM_001374170.1"/>
</dbReference>
<dbReference type="RefSeq" id="NP_001361100.1">
    <molecule id="P70266-2"/>
    <property type="nucleotide sequence ID" value="NM_001374171.1"/>
</dbReference>
<dbReference type="RefSeq" id="NP_001361101.1">
    <molecule id="P70266-2"/>
    <property type="nucleotide sequence ID" value="NM_001374172.1"/>
</dbReference>
<dbReference type="RefSeq" id="NP_001361102.1">
    <molecule id="P70266-1"/>
    <property type="nucleotide sequence ID" value="NM_001374173.1"/>
</dbReference>
<dbReference type="RefSeq" id="NP_001398692.1">
    <molecule id="P70266-2"/>
    <property type="nucleotide sequence ID" value="NM_001411763.1"/>
</dbReference>
<dbReference type="RefSeq" id="NP_032850.1">
    <molecule id="P70266-2"/>
    <property type="nucleotide sequence ID" value="NM_008824.4"/>
</dbReference>
<dbReference type="RefSeq" id="XP_006528818.1">
    <property type="nucleotide sequence ID" value="XM_006528755.2"/>
</dbReference>
<dbReference type="RefSeq" id="XP_011246093.1">
    <property type="nucleotide sequence ID" value="XM_011247791.2"/>
</dbReference>
<dbReference type="RefSeq" id="XP_036017743.1">
    <molecule id="P70266-2"/>
    <property type="nucleotide sequence ID" value="XM_036161850.1"/>
</dbReference>
<dbReference type="BMRB" id="P70266"/>
<dbReference type="SMR" id="P70266"/>
<dbReference type="ComplexPortal" id="CPX-2039">
    <property type="entry name" value="6-phosphofructo-2-kinase/fructose-2,6-biphosphatase 1 complex"/>
</dbReference>
<dbReference type="FunCoup" id="P70266">
    <property type="interactions" value="588"/>
</dbReference>
<dbReference type="STRING" id="10090.ENSMUSP00000079692"/>
<dbReference type="GlyGen" id="P70266">
    <property type="glycosylation" value="1 site"/>
</dbReference>
<dbReference type="iPTMnet" id="P70266"/>
<dbReference type="PhosphoSitePlus" id="P70266"/>
<dbReference type="jPOST" id="P70266"/>
<dbReference type="PaxDb" id="10090-ENSMUSP00000079692"/>
<dbReference type="ProteomicsDB" id="275570">
    <molecule id="P70266-1"/>
</dbReference>
<dbReference type="ProteomicsDB" id="275571">
    <molecule id="P70266-2"/>
</dbReference>
<dbReference type="Antibodypedia" id="533">
    <property type="antibodies" value="271 antibodies from 30 providers"/>
</dbReference>
<dbReference type="DNASU" id="18639"/>
<dbReference type="Ensembl" id="ENSMUST00000080884.11">
    <molecule id="P70266-2"/>
    <property type="protein sequence ID" value="ENSMUSP00000079692.5"/>
    <property type="gene ID" value="ENSMUSG00000025271.14"/>
</dbReference>
<dbReference type="Ensembl" id="ENSMUST00000112713.3">
    <molecule id="P70266-1"/>
    <property type="protein sequence ID" value="ENSMUSP00000108333.3"/>
    <property type="gene ID" value="ENSMUSG00000025271.14"/>
</dbReference>
<dbReference type="GeneID" id="18639"/>
<dbReference type="KEGG" id="mmu:18639"/>
<dbReference type="AGR" id="MGI:107816"/>
<dbReference type="CTD" id="5207"/>
<dbReference type="MGI" id="MGI:107816">
    <property type="gene designation" value="Pfkfb1"/>
</dbReference>
<dbReference type="VEuPathDB" id="HostDB:ENSMUSG00000025271"/>
<dbReference type="eggNOG" id="KOG0234">
    <property type="taxonomic scope" value="Eukaryota"/>
</dbReference>
<dbReference type="GeneTree" id="ENSGT00950000182835"/>
<dbReference type="HOGENOM" id="CLU_006383_1_1_1"/>
<dbReference type="InParanoid" id="P70266"/>
<dbReference type="OMA" id="RCMYAYF"/>
<dbReference type="OrthoDB" id="267323at2759"/>
<dbReference type="PhylomeDB" id="P70266"/>
<dbReference type="TreeFam" id="TF313541"/>
<dbReference type="Reactome" id="R-MMU-9634600">
    <property type="pathway name" value="Regulation of glycolysis by fructose 2,6-bisphosphate metabolism"/>
</dbReference>
<dbReference type="BioGRID-ORCS" id="18639">
    <property type="hits" value="1 hit in 63 CRISPR screens"/>
</dbReference>
<dbReference type="ChiTaRS" id="Pfkfb1">
    <property type="organism name" value="mouse"/>
</dbReference>
<dbReference type="PRO" id="PR:P70266"/>
<dbReference type="Proteomes" id="UP000000589">
    <property type="component" value="Chromosome X"/>
</dbReference>
<dbReference type="RNAct" id="P70266">
    <property type="molecule type" value="protein"/>
</dbReference>
<dbReference type="Bgee" id="ENSMUSG00000025271">
    <property type="expression patterns" value="Expressed in hindlimb stylopod muscle and 180 other cell types or tissues"/>
</dbReference>
<dbReference type="ExpressionAtlas" id="P70266">
    <property type="expression patterns" value="baseline and differential"/>
</dbReference>
<dbReference type="GO" id="GO:0043540">
    <property type="term" value="C:6-phosphofructo-2-kinase/fructose-2,6-biphosphatase complex"/>
    <property type="evidence" value="ECO:0000250"/>
    <property type="project" value="UniProtKB"/>
</dbReference>
<dbReference type="GO" id="GO:0005829">
    <property type="term" value="C:cytosol"/>
    <property type="evidence" value="ECO:0000266"/>
    <property type="project" value="MGI"/>
</dbReference>
<dbReference type="GO" id="GO:0003873">
    <property type="term" value="F:6-phosphofructo-2-kinase activity"/>
    <property type="evidence" value="ECO:0000266"/>
    <property type="project" value="MGI"/>
</dbReference>
<dbReference type="GO" id="GO:0005524">
    <property type="term" value="F:ATP binding"/>
    <property type="evidence" value="ECO:0007669"/>
    <property type="project" value="UniProtKB-KW"/>
</dbReference>
<dbReference type="GO" id="GO:0004331">
    <property type="term" value="F:fructose-2,6-bisphosphate 2-phosphatase activity"/>
    <property type="evidence" value="ECO:0000316"/>
    <property type="project" value="MGI"/>
</dbReference>
<dbReference type="GO" id="GO:0042802">
    <property type="term" value="F:identical protein binding"/>
    <property type="evidence" value="ECO:0007669"/>
    <property type="project" value="Ensembl"/>
</dbReference>
<dbReference type="GO" id="GO:0006003">
    <property type="term" value="P:fructose 2,6-bisphosphate metabolic process"/>
    <property type="evidence" value="ECO:0000250"/>
    <property type="project" value="UniProtKB"/>
</dbReference>
<dbReference type="GO" id="GO:0006000">
    <property type="term" value="P:fructose metabolic process"/>
    <property type="evidence" value="ECO:0007669"/>
    <property type="project" value="InterPro"/>
</dbReference>
<dbReference type="GO" id="GO:1904539">
    <property type="term" value="P:negative regulation of glycolytic process through fructose-6-phosphate"/>
    <property type="evidence" value="ECO:0000315"/>
    <property type="project" value="MGI"/>
</dbReference>
<dbReference type="GO" id="GO:0045722">
    <property type="term" value="P:positive regulation of gluconeogenesis"/>
    <property type="evidence" value="ECO:0000266"/>
    <property type="project" value="MGI"/>
</dbReference>
<dbReference type="GO" id="GO:1904540">
    <property type="term" value="P:positive regulation of glycolytic process through fructose-6-phosphate"/>
    <property type="evidence" value="ECO:0000266"/>
    <property type="project" value="MGI"/>
</dbReference>
<dbReference type="CDD" id="cd07067">
    <property type="entry name" value="HP_PGM_like"/>
    <property type="match status" value="1"/>
</dbReference>
<dbReference type="FunFam" id="3.40.50.1240:FF:000001">
    <property type="entry name" value="6-phosphofructo-2-kinase/fructose-2, 6-bisphosphatase 3 isoform 2"/>
    <property type="match status" value="1"/>
</dbReference>
<dbReference type="FunFam" id="3.40.50.300:FF:000047">
    <property type="entry name" value="6-phosphofructo-2-kinase/fructose-2, 6-bisphosphatase 3 isoform 2"/>
    <property type="match status" value="1"/>
</dbReference>
<dbReference type="Gene3D" id="3.40.50.300">
    <property type="entry name" value="P-loop containing nucleotide triphosphate hydrolases"/>
    <property type="match status" value="1"/>
</dbReference>
<dbReference type="Gene3D" id="3.40.50.1240">
    <property type="entry name" value="Phosphoglycerate mutase-like"/>
    <property type="match status" value="1"/>
</dbReference>
<dbReference type="InterPro" id="IPR003094">
    <property type="entry name" value="6Pfruct_kin"/>
</dbReference>
<dbReference type="InterPro" id="IPR013079">
    <property type="entry name" value="6Phosfructo_kin"/>
</dbReference>
<dbReference type="InterPro" id="IPR013078">
    <property type="entry name" value="His_Pase_superF_clade-1"/>
</dbReference>
<dbReference type="InterPro" id="IPR029033">
    <property type="entry name" value="His_PPase_superfam"/>
</dbReference>
<dbReference type="InterPro" id="IPR027417">
    <property type="entry name" value="P-loop_NTPase"/>
</dbReference>
<dbReference type="InterPro" id="IPR001345">
    <property type="entry name" value="PG/BPGM_mutase_AS"/>
</dbReference>
<dbReference type="PANTHER" id="PTHR10606">
    <property type="entry name" value="6-PHOSPHOFRUCTO-2-KINASE/FRUCTOSE-2,6-BISPHOSPHATASE"/>
    <property type="match status" value="1"/>
</dbReference>
<dbReference type="PANTHER" id="PTHR10606:SF15">
    <property type="entry name" value="6-PHOSPHOFRUCTO-2-KINASE_FRUCTOSE-2,6-BISPHOSPHATASE 1"/>
    <property type="match status" value="1"/>
</dbReference>
<dbReference type="Pfam" id="PF01591">
    <property type="entry name" value="6PF2K"/>
    <property type="match status" value="1"/>
</dbReference>
<dbReference type="Pfam" id="PF00300">
    <property type="entry name" value="His_Phos_1"/>
    <property type="match status" value="1"/>
</dbReference>
<dbReference type="PIRSF" id="PIRSF000709">
    <property type="entry name" value="6PFK_2-Ptase"/>
    <property type="match status" value="1"/>
</dbReference>
<dbReference type="PRINTS" id="PR00991">
    <property type="entry name" value="6PFRUCTKNASE"/>
</dbReference>
<dbReference type="SMART" id="SM00855">
    <property type="entry name" value="PGAM"/>
    <property type="match status" value="1"/>
</dbReference>
<dbReference type="SUPFAM" id="SSF52540">
    <property type="entry name" value="P-loop containing nucleoside triphosphate hydrolases"/>
    <property type="match status" value="1"/>
</dbReference>
<dbReference type="SUPFAM" id="SSF53254">
    <property type="entry name" value="Phosphoglycerate mutase-like"/>
    <property type="match status" value="1"/>
</dbReference>
<dbReference type="PROSITE" id="PS00175">
    <property type="entry name" value="PG_MUTASE"/>
    <property type="match status" value="1"/>
</dbReference>
<keyword id="KW-0007">Acetylation</keyword>
<keyword id="KW-0025">Alternative splicing</keyword>
<keyword id="KW-0067">ATP-binding</keyword>
<keyword id="KW-0378">Hydrolase</keyword>
<keyword id="KW-0418">Kinase</keyword>
<keyword id="KW-0511">Multifunctional enzyme</keyword>
<keyword id="KW-0547">Nucleotide-binding</keyword>
<keyword id="KW-0597">Phosphoprotein</keyword>
<keyword id="KW-1185">Reference proteome</keyword>
<keyword id="KW-0808">Transferase</keyword>
<gene>
    <name evidence="8" type="primary">Pfkfb1</name>
</gene>
<proteinExistence type="evidence at protein level"/>
<accession>P70266</accession>
<accession>A2AFN0</accession>
<accession>Q3V180</accession>
<name>F261_MOUSE</name>
<organism>
    <name type="scientific">Mus musculus</name>
    <name type="common">Mouse</name>
    <dbReference type="NCBI Taxonomy" id="10090"/>
    <lineage>
        <taxon>Eukaryota</taxon>
        <taxon>Metazoa</taxon>
        <taxon>Chordata</taxon>
        <taxon>Craniata</taxon>
        <taxon>Vertebrata</taxon>
        <taxon>Euteleostomi</taxon>
        <taxon>Mammalia</taxon>
        <taxon>Eutheria</taxon>
        <taxon>Euarchontoglires</taxon>
        <taxon>Glires</taxon>
        <taxon>Rodentia</taxon>
        <taxon>Myomorpha</taxon>
        <taxon>Muroidea</taxon>
        <taxon>Muridae</taxon>
        <taxon>Murinae</taxon>
        <taxon>Mus</taxon>
        <taxon>Mus</taxon>
    </lineage>
</organism>
<protein>
    <recommendedName>
        <fullName evidence="7">6-phosphofructo-2-kinase/fructose-2,6-bisphosphatase 1</fullName>
        <shortName>6PF-2-K/Fru-2,6-P2ase 1</shortName>
        <shortName>PFK/FBPase 1</shortName>
    </recommendedName>
    <alternativeName>
        <fullName>6PF-2-K/Fru-2,6-P2ase liver isozyme</fullName>
    </alternativeName>
    <domain>
        <recommendedName>
            <fullName>6-phosphofructo-2-kinase</fullName>
            <ecNumber evidence="3">2.7.1.105</ecNumber>
        </recommendedName>
    </domain>
    <domain>
        <recommendedName>
            <fullName>Fructose-2,6-bisphosphatase</fullName>
            <ecNumber evidence="3">3.1.3.46</ecNumber>
        </recommendedName>
    </domain>
</protein>
<comment type="function">
    <text evidence="3">Synthesis and degradation of fructose 2,6-bisphosphate.</text>
</comment>
<comment type="catalytic activity">
    <reaction evidence="3">
        <text>beta-D-fructose 2,6-bisphosphate + H2O = beta-D-fructose 6-phosphate + phosphate</text>
        <dbReference type="Rhea" id="RHEA:17289"/>
        <dbReference type="ChEBI" id="CHEBI:15377"/>
        <dbReference type="ChEBI" id="CHEBI:43474"/>
        <dbReference type="ChEBI" id="CHEBI:57634"/>
        <dbReference type="ChEBI" id="CHEBI:58579"/>
        <dbReference type="EC" id="3.1.3.46"/>
    </reaction>
    <physiologicalReaction direction="left-to-right" evidence="3">
        <dbReference type="Rhea" id="RHEA:17290"/>
    </physiologicalReaction>
</comment>
<comment type="catalytic activity">
    <reaction evidence="3">
        <text>beta-D-fructose 6-phosphate + ATP = beta-D-fructose 2,6-bisphosphate + ADP + H(+)</text>
        <dbReference type="Rhea" id="RHEA:15653"/>
        <dbReference type="ChEBI" id="CHEBI:15378"/>
        <dbReference type="ChEBI" id="CHEBI:30616"/>
        <dbReference type="ChEBI" id="CHEBI:57634"/>
        <dbReference type="ChEBI" id="CHEBI:58579"/>
        <dbReference type="ChEBI" id="CHEBI:456216"/>
        <dbReference type="EC" id="2.7.1.105"/>
    </reaction>
    <physiologicalReaction direction="left-to-right" evidence="3">
        <dbReference type="Rhea" id="RHEA:15654"/>
    </physiologicalReaction>
</comment>
<comment type="activity regulation">
    <text evidence="3">Phosphorylation at Ser-33 inhibits the kinase and activates the bisphosphatase.</text>
</comment>
<comment type="subunit">
    <text evidence="3">Homodimer.</text>
</comment>
<comment type="alternative products">
    <event type="alternative splicing"/>
    <isoform>
        <id>P70266-1</id>
        <name>1</name>
        <sequence type="displayed"/>
    </isoform>
    <isoform>
        <id>P70266-2</id>
        <name>2</name>
        <sequence type="described" ref="VSP_022168"/>
    </isoform>
</comment>
<comment type="tissue specificity">
    <text>Liver.</text>
</comment>
<comment type="similarity">
    <text evidence="7">In the C-terminal section; belongs to the phosphoglycerate mutase family.</text>
</comment>
<feature type="initiator methionine" description="Removed" evidence="3">
    <location>
        <position position="1"/>
    </location>
</feature>
<feature type="chain" id="PRO_0000179961" description="6-phosphofructo-2-kinase/fructose-2,6-bisphosphatase 1">
    <location>
        <begin position="2"/>
        <end position="471"/>
    </location>
</feature>
<feature type="region of interest" description="6-phosphofructo-2-kinase" evidence="1">
    <location>
        <begin position="2"/>
        <end position="250"/>
    </location>
</feature>
<feature type="region of interest" description="Fructose-2,6-bisphosphatase" evidence="1">
    <location>
        <begin position="251"/>
        <end position="471"/>
    </location>
</feature>
<feature type="active site" evidence="5">
    <location>
        <position position="131"/>
    </location>
</feature>
<feature type="active site" evidence="5">
    <location>
        <position position="161"/>
    </location>
</feature>
<feature type="active site" description="Tele-phosphohistidine intermediate" evidence="3">
    <location>
        <position position="259"/>
    </location>
</feature>
<feature type="active site" description="Proton donor/acceptor" evidence="3">
    <location>
        <position position="328"/>
    </location>
</feature>
<feature type="binding site" evidence="4">
    <location>
        <begin position="49"/>
        <end position="57"/>
    </location>
    <ligand>
        <name>ATP</name>
        <dbReference type="ChEBI" id="CHEBI:30616"/>
    </ligand>
</feature>
<feature type="binding site" evidence="4">
    <location>
        <position position="82"/>
    </location>
    <ligand>
        <name>beta-D-fructose 6-phosphate</name>
        <dbReference type="ChEBI" id="CHEBI:57634"/>
    </ligand>
</feature>
<feature type="binding site" evidence="4">
    <location>
        <position position="105"/>
    </location>
    <ligand>
        <name>beta-D-fructose 6-phosphate</name>
        <dbReference type="ChEBI" id="CHEBI:57634"/>
    </ligand>
</feature>
<feature type="binding site" evidence="4">
    <location>
        <position position="133"/>
    </location>
    <ligand>
        <name>beta-D-fructose 6-phosphate</name>
        <dbReference type="ChEBI" id="CHEBI:57634"/>
    </ligand>
</feature>
<feature type="binding site" evidence="4">
    <location>
        <position position="139"/>
    </location>
    <ligand>
        <name>beta-D-fructose 6-phosphate</name>
        <dbReference type="ChEBI" id="CHEBI:57634"/>
    </ligand>
</feature>
<feature type="binding site" evidence="4">
    <location>
        <begin position="170"/>
        <end position="175"/>
    </location>
    <ligand>
        <name>ATP</name>
        <dbReference type="ChEBI" id="CHEBI:30616"/>
    </ligand>
</feature>
<feature type="binding site" evidence="4">
    <location>
        <position position="175"/>
    </location>
    <ligand>
        <name>beta-D-fructose 6-phosphate</name>
        <dbReference type="ChEBI" id="CHEBI:57634"/>
    </ligand>
</feature>
<feature type="binding site" evidence="4">
    <location>
        <position position="196"/>
    </location>
    <ligand>
        <name>beta-D-fructose 6-phosphate</name>
        <dbReference type="ChEBI" id="CHEBI:57634"/>
    </ligand>
</feature>
<feature type="binding site" evidence="4">
    <location>
        <position position="200"/>
    </location>
    <ligand>
        <name>beta-D-fructose 6-phosphate</name>
        <dbReference type="ChEBI" id="CHEBI:57634"/>
    </ligand>
</feature>
<feature type="binding site" evidence="4">
    <location>
        <position position="258"/>
    </location>
    <ligand>
        <name>beta-D-fructose 2,6-bisphosphate</name>
        <dbReference type="ChEBI" id="CHEBI:58579"/>
    </ligand>
</feature>
<feature type="binding site" evidence="4">
    <location>
        <position position="265"/>
    </location>
    <ligand>
        <name>beta-D-fructose 2,6-bisphosphate</name>
        <dbReference type="ChEBI" id="CHEBI:58579"/>
    </ligand>
</feature>
<feature type="binding site" evidence="3">
    <location>
        <position position="271"/>
    </location>
    <ligand>
        <name>beta-D-fructose 2,6-bisphosphate</name>
        <dbReference type="ChEBI" id="CHEBI:58579"/>
    </ligand>
</feature>
<feature type="binding site" evidence="4">
    <location>
        <position position="308"/>
    </location>
    <ligand>
        <name>beta-D-fructose 2,6-bisphosphate</name>
        <dbReference type="ChEBI" id="CHEBI:58579"/>
    </ligand>
</feature>
<feature type="binding site" evidence="3">
    <location>
        <position position="339"/>
    </location>
    <ligand>
        <name>beta-D-fructose 2,6-bisphosphate</name>
        <dbReference type="ChEBI" id="CHEBI:58579"/>
    </ligand>
</feature>
<feature type="binding site" evidence="3">
    <location>
        <begin position="350"/>
        <end position="353"/>
    </location>
    <ligand>
        <name>ATP</name>
        <dbReference type="ChEBI" id="CHEBI:30616"/>
    </ligand>
</feature>
<feature type="binding site" evidence="3">
    <location>
        <position position="353"/>
    </location>
    <ligand>
        <name>beta-D-fructose 2,6-bisphosphate</name>
        <dbReference type="ChEBI" id="CHEBI:58579"/>
    </ligand>
</feature>
<feature type="binding site" evidence="3">
    <location>
        <position position="357"/>
    </location>
    <ligand>
        <name>beta-D-fructose 2,6-bisphosphate</name>
        <dbReference type="ChEBI" id="CHEBI:58579"/>
    </ligand>
</feature>
<feature type="binding site" evidence="3">
    <location>
        <position position="368"/>
    </location>
    <ligand>
        <name>beta-D-fructose 2,6-bisphosphate</name>
        <dbReference type="ChEBI" id="CHEBI:58579"/>
    </ligand>
</feature>
<feature type="binding site" evidence="3">
    <location>
        <begin position="394"/>
        <end position="398"/>
    </location>
    <ligand>
        <name>ATP</name>
        <dbReference type="ChEBI" id="CHEBI:30616"/>
    </ligand>
</feature>
<feature type="binding site" evidence="3">
    <location>
        <position position="394"/>
    </location>
    <ligand>
        <name>beta-D-fructose 2,6-bisphosphate</name>
        <dbReference type="ChEBI" id="CHEBI:58579"/>
    </ligand>
</feature>
<feature type="binding site" evidence="3">
    <location>
        <position position="398"/>
    </location>
    <ligand>
        <name>beta-D-fructose 2,6-bisphosphate</name>
        <dbReference type="ChEBI" id="CHEBI:58579"/>
    </ligand>
</feature>
<feature type="binding site" evidence="4">
    <location>
        <position position="430"/>
    </location>
    <ligand>
        <name>ATP</name>
        <dbReference type="ChEBI" id="CHEBI:30616"/>
    </ligand>
</feature>
<feature type="site" description="Transition state stabilizer" evidence="2">
    <location>
        <position position="393"/>
    </location>
</feature>
<feature type="modified residue" description="N-acetylserine" evidence="3">
    <location>
        <position position="2"/>
    </location>
</feature>
<feature type="modified residue" description="Phosphoserine; by PKA" evidence="3">
    <location>
        <position position="33"/>
    </location>
</feature>
<feature type="modified residue" description="Phosphoserine" evidence="3">
    <location>
        <position position="141"/>
    </location>
</feature>
<feature type="splice variant" id="VSP_022168" description="In isoform 2." evidence="6">
    <original>MSREMGELTQTRLQKIWIPHSSSSSLLQRRRGS</original>
    <variation>MEEKASKRAA</variation>
    <location>
        <begin position="1"/>
        <end position="33"/>
    </location>
</feature>
<feature type="sequence conflict" description="In Ref. 3; CAA67353." evidence="7" ref="3">
    <original>P</original>
    <variation>A</variation>
    <location>
        <position position="460"/>
    </location>
</feature>
<sequence length="471" mass="54849">MSREMGELTQTRLQKIWIPHSSSSSLLQRRRGSSIPQFTNSPTMVIMVGLPARGKTYISTKLTRYLNWIGTPTKVFNLGQYRREAVSYRNYEFFRPDNMEAQLIRKQCALAALKDVHKYLSREEGHVAVFDATNTTRERRSLILQFAKEHGYKVFFIESICNDPDIIAENIKQVKLGSPDYIDCDQEKVLEDFLKRIECYEINYQPLDEELDSHLSYIKIFDVGTRYMVNRVQDHVQSRTAYYLMNIHVTPRSIYLCRHGESELNLRGRIGGDSGLSARGKQYAYALANFIRSQSISSLKVWTSHMKRTIQTAEALGVPYEQWKALNEIDAGVCEEMTYEEIQEHYPEEFALRDQDKYRYRYPKGESYEDLVQRLEPVIMELERQENVLVICHQAVMRCLLAYFLDKSSDELPYLKCPLHTVLKLTPVAYGCRVESIYLNVEAVNTHRDKPENVDITREPEEALDTVPAHY</sequence>
<reference key="1">
    <citation type="journal article" date="2005" name="Science">
        <title>The transcriptional landscape of the mammalian genome.</title>
        <authorList>
            <person name="Carninci P."/>
            <person name="Kasukawa T."/>
            <person name="Katayama S."/>
            <person name="Gough J."/>
            <person name="Frith M.C."/>
            <person name="Maeda N."/>
            <person name="Oyama R."/>
            <person name="Ravasi T."/>
            <person name="Lenhard B."/>
            <person name="Wells C."/>
            <person name="Kodzius R."/>
            <person name="Shimokawa K."/>
            <person name="Bajic V.B."/>
            <person name="Brenner S.E."/>
            <person name="Batalov S."/>
            <person name="Forrest A.R."/>
            <person name="Zavolan M."/>
            <person name="Davis M.J."/>
            <person name="Wilming L.G."/>
            <person name="Aidinis V."/>
            <person name="Allen J.E."/>
            <person name="Ambesi-Impiombato A."/>
            <person name="Apweiler R."/>
            <person name="Aturaliya R.N."/>
            <person name="Bailey T.L."/>
            <person name="Bansal M."/>
            <person name="Baxter L."/>
            <person name="Beisel K.W."/>
            <person name="Bersano T."/>
            <person name="Bono H."/>
            <person name="Chalk A.M."/>
            <person name="Chiu K.P."/>
            <person name="Choudhary V."/>
            <person name="Christoffels A."/>
            <person name="Clutterbuck D.R."/>
            <person name="Crowe M.L."/>
            <person name="Dalla E."/>
            <person name="Dalrymple B.P."/>
            <person name="de Bono B."/>
            <person name="Della Gatta G."/>
            <person name="di Bernardo D."/>
            <person name="Down T."/>
            <person name="Engstrom P."/>
            <person name="Fagiolini M."/>
            <person name="Faulkner G."/>
            <person name="Fletcher C.F."/>
            <person name="Fukushima T."/>
            <person name="Furuno M."/>
            <person name="Futaki S."/>
            <person name="Gariboldi M."/>
            <person name="Georgii-Hemming P."/>
            <person name="Gingeras T.R."/>
            <person name="Gojobori T."/>
            <person name="Green R.E."/>
            <person name="Gustincich S."/>
            <person name="Harbers M."/>
            <person name="Hayashi Y."/>
            <person name="Hensch T.K."/>
            <person name="Hirokawa N."/>
            <person name="Hill D."/>
            <person name="Huminiecki L."/>
            <person name="Iacono M."/>
            <person name="Ikeo K."/>
            <person name="Iwama A."/>
            <person name="Ishikawa T."/>
            <person name="Jakt M."/>
            <person name="Kanapin A."/>
            <person name="Katoh M."/>
            <person name="Kawasawa Y."/>
            <person name="Kelso J."/>
            <person name="Kitamura H."/>
            <person name="Kitano H."/>
            <person name="Kollias G."/>
            <person name="Krishnan S.P."/>
            <person name="Kruger A."/>
            <person name="Kummerfeld S.K."/>
            <person name="Kurochkin I.V."/>
            <person name="Lareau L.F."/>
            <person name="Lazarevic D."/>
            <person name="Lipovich L."/>
            <person name="Liu J."/>
            <person name="Liuni S."/>
            <person name="McWilliam S."/>
            <person name="Madan Babu M."/>
            <person name="Madera M."/>
            <person name="Marchionni L."/>
            <person name="Matsuda H."/>
            <person name="Matsuzawa S."/>
            <person name="Miki H."/>
            <person name="Mignone F."/>
            <person name="Miyake S."/>
            <person name="Morris K."/>
            <person name="Mottagui-Tabar S."/>
            <person name="Mulder N."/>
            <person name="Nakano N."/>
            <person name="Nakauchi H."/>
            <person name="Ng P."/>
            <person name="Nilsson R."/>
            <person name="Nishiguchi S."/>
            <person name="Nishikawa S."/>
            <person name="Nori F."/>
            <person name="Ohara O."/>
            <person name="Okazaki Y."/>
            <person name="Orlando V."/>
            <person name="Pang K.C."/>
            <person name="Pavan W.J."/>
            <person name="Pavesi G."/>
            <person name="Pesole G."/>
            <person name="Petrovsky N."/>
            <person name="Piazza S."/>
            <person name="Reed J."/>
            <person name="Reid J.F."/>
            <person name="Ring B.Z."/>
            <person name="Ringwald M."/>
            <person name="Rost B."/>
            <person name="Ruan Y."/>
            <person name="Salzberg S.L."/>
            <person name="Sandelin A."/>
            <person name="Schneider C."/>
            <person name="Schoenbach C."/>
            <person name="Sekiguchi K."/>
            <person name="Semple C.A."/>
            <person name="Seno S."/>
            <person name="Sessa L."/>
            <person name="Sheng Y."/>
            <person name="Shibata Y."/>
            <person name="Shimada H."/>
            <person name="Shimada K."/>
            <person name="Silva D."/>
            <person name="Sinclair B."/>
            <person name="Sperling S."/>
            <person name="Stupka E."/>
            <person name="Sugiura K."/>
            <person name="Sultana R."/>
            <person name="Takenaka Y."/>
            <person name="Taki K."/>
            <person name="Tammoja K."/>
            <person name="Tan S.L."/>
            <person name="Tang S."/>
            <person name="Taylor M.S."/>
            <person name="Tegner J."/>
            <person name="Teichmann S.A."/>
            <person name="Ueda H.R."/>
            <person name="van Nimwegen E."/>
            <person name="Verardo R."/>
            <person name="Wei C.L."/>
            <person name="Yagi K."/>
            <person name="Yamanishi H."/>
            <person name="Zabarovsky E."/>
            <person name="Zhu S."/>
            <person name="Zimmer A."/>
            <person name="Hide W."/>
            <person name="Bult C."/>
            <person name="Grimmond S.M."/>
            <person name="Teasdale R.D."/>
            <person name="Liu E.T."/>
            <person name="Brusic V."/>
            <person name="Quackenbush J."/>
            <person name="Wahlestedt C."/>
            <person name="Mattick J.S."/>
            <person name="Hume D.A."/>
            <person name="Kai C."/>
            <person name="Sasaki D."/>
            <person name="Tomaru Y."/>
            <person name="Fukuda S."/>
            <person name="Kanamori-Katayama M."/>
            <person name="Suzuki M."/>
            <person name="Aoki J."/>
            <person name="Arakawa T."/>
            <person name="Iida J."/>
            <person name="Imamura K."/>
            <person name="Itoh M."/>
            <person name="Kato T."/>
            <person name="Kawaji H."/>
            <person name="Kawagashira N."/>
            <person name="Kawashima T."/>
            <person name="Kojima M."/>
            <person name="Kondo S."/>
            <person name="Konno H."/>
            <person name="Nakano K."/>
            <person name="Ninomiya N."/>
            <person name="Nishio T."/>
            <person name="Okada M."/>
            <person name="Plessy C."/>
            <person name="Shibata K."/>
            <person name="Shiraki T."/>
            <person name="Suzuki S."/>
            <person name="Tagami M."/>
            <person name="Waki K."/>
            <person name="Watahiki A."/>
            <person name="Okamura-Oho Y."/>
            <person name="Suzuki H."/>
            <person name="Kawai J."/>
            <person name="Hayashizaki Y."/>
        </authorList>
    </citation>
    <scope>NUCLEOTIDE SEQUENCE [LARGE SCALE MRNA] (ISOFORM 2)</scope>
    <source>
        <strain>C57BL/6J</strain>
        <tissue>Head</tissue>
    </source>
</reference>
<reference key="2">
    <citation type="journal article" date="2009" name="PLoS Biol.">
        <title>Lineage-specific biology revealed by a finished genome assembly of the mouse.</title>
        <authorList>
            <person name="Church D.M."/>
            <person name="Goodstadt L."/>
            <person name="Hillier L.W."/>
            <person name="Zody M.C."/>
            <person name="Goldstein S."/>
            <person name="She X."/>
            <person name="Bult C.J."/>
            <person name="Agarwala R."/>
            <person name="Cherry J.L."/>
            <person name="DiCuccio M."/>
            <person name="Hlavina W."/>
            <person name="Kapustin Y."/>
            <person name="Meric P."/>
            <person name="Maglott D."/>
            <person name="Birtle Z."/>
            <person name="Marques A.C."/>
            <person name="Graves T."/>
            <person name="Zhou S."/>
            <person name="Teague B."/>
            <person name="Potamousis K."/>
            <person name="Churas C."/>
            <person name="Place M."/>
            <person name="Herschleb J."/>
            <person name="Runnheim R."/>
            <person name="Forrest D."/>
            <person name="Amos-Landgraf J."/>
            <person name="Schwartz D.C."/>
            <person name="Cheng Z."/>
            <person name="Lindblad-Toh K."/>
            <person name="Eichler E.E."/>
            <person name="Ponting C.P."/>
        </authorList>
    </citation>
    <scope>NUCLEOTIDE SEQUENCE [LARGE SCALE GENOMIC DNA]</scope>
    <source>
        <strain>C57BL/6J</strain>
    </source>
</reference>
<reference key="3">
    <citation type="journal article" date="1996" name="FEBS Lett.">
        <title>Molecular cloning and tissue-specific expression of mouse kidney 6-phosphofructo-2-kinase/fructose-2,6-bisphosphatase.</title>
        <authorList>
            <person name="Batra R.S."/>
            <person name="Brown R.M."/>
            <person name="Brown G.K."/>
            <person name="Craig I.W."/>
        </authorList>
    </citation>
    <scope>NUCLEOTIDE SEQUENCE [MRNA] OF 402-471 (ISOFORM 1)</scope>
    <source>
        <strain>BALB/cJ</strain>
        <tissue>Liver</tissue>
    </source>
</reference>
<reference key="4">
    <citation type="journal article" date="2010" name="Cell">
        <title>A tissue-specific atlas of mouse protein phosphorylation and expression.</title>
        <authorList>
            <person name="Huttlin E.L."/>
            <person name="Jedrychowski M.P."/>
            <person name="Elias J.E."/>
            <person name="Goswami T."/>
            <person name="Rad R."/>
            <person name="Beausoleil S.A."/>
            <person name="Villen J."/>
            <person name="Haas W."/>
            <person name="Sowa M.E."/>
            <person name="Gygi S.P."/>
        </authorList>
    </citation>
    <scope>IDENTIFICATION BY MASS SPECTROMETRY [LARGE SCALE ANALYSIS]</scope>
    <source>
        <tissue>Brown adipose tissue</tissue>
        <tissue>Liver</tissue>
    </source>
</reference>
<evidence type="ECO:0000250" key="1"/>
<evidence type="ECO:0000250" key="2">
    <source>
        <dbReference type="UniProtKB" id="P00950"/>
    </source>
</evidence>
<evidence type="ECO:0000250" key="3">
    <source>
        <dbReference type="UniProtKB" id="P07953"/>
    </source>
</evidence>
<evidence type="ECO:0000250" key="4">
    <source>
        <dbReference type="UniProtKB" id="Q16875"/>
    </source>
</evidence>
<evidence type="ECO:0000255" key="5"/>
<evidence type="ECO:0000303" key="6">
    <source>
    </source>
</evidence>
<evidence type="ECO:0000305" key="7"/>
<evidence type="ECO:0000312" key="8">
    <source>
        <dbReference type="MGI" id="MGI:107816"/>
    </source>
</evidence>